<proteinExistence type="inferred from homology"/>
<dbReference type="EMBL" id="CP000850">
    <property type="protein sequence ID" value="ABW00116.1"/>
    <property type="molecule type" value="Genomic_DNA"/>
</dbReference>
<dbReference type="SMR" id="A8M548"/>
<dbReference type="STRING" id="391037.Sare_4334"/>
<dbReference type="KEGG" id="saq:Sare_4334"/>
<dbReference type="PATRIC" id="fig|391037.6.peg.4375"/>
<dbReference type="eggNOG" id="COG0267">
    <property type="taxonomic scope" value="Bacteria"/>
</dbReference>
<dbReference type="HOGENOM" id="CLU_190949_0_2_11"/>
<dbReference type="OrthoDB" id="21586at2"/>
<dbReference type="GO" id="GO:0005737">
    <property type="term" value="C:cytoplasm"/>
    <property type="evidence" value="ECO:0007669"/>
    <property type="project" value="UniProtKB-ARBA"/>
</dbReference>
<dbReference type="GO" id="GO:1990904">
    <property type="term" value="C:ribonucleoprotein complex"/>
    <property type="evidence" value="ECO:0007669"/>
    <property type="project" value="UniProtKB-KW"/>
</dbReference>
<dbReference type="GO" id="GO:0005840">
    <property type="term" value="C:ribosome"/>
    <property type="evidence" value="ECO:0007669"/>
    <property type="project" value="UniProtKB-KW"/>
</dbReference>
<dbReference type="GO" id="GO:0003735">
    <property type="term" value="F:structural constituent of ribosome"/>
    <property type="evidence" value="ECO:0007669"/>
    <property type="project" value="InterPro"/>
</dbReference>
<dbReference type="GO" id="GO:0006412">
    <property type="term" value="P:translation"/>
    <property type="evidence" value="ECO:0007669"/>
    <property type="project" value="UniProtKB-UniRule"/>
</dbReference>
<dbReference type="Gene3D" id="2.20.28.120">
    <property type="entry name" value="Ribosomal protein L33"/>
    <property type="match status" value="1"/>
</dbReference>
<dbReference type="HAMAP" id="MF_00294">
    <property type="entry name" value="Ribosomal_bL33"/>
    <property type="match status" value="1"/>
</dbReference>
<dbReference type="InterPro" id="IPR001705">
    <property type="entry name" value="Ribosomal_bL33"/>
</dbReference>
<dbReference type="InterPro" id="IPR018264">
    <property type="entry name" value="Ribosomal_bL33_CS"/>
</dbReference>
<dbReference type="InterPro" id="IPR038584">
    <property type="entry name" value="Ribosomal_bL33_sf"/>
</dbReference>
<dbReference type="InterPro" id="IPR011332">
    <property type="entry name" value="Ribosomal_zn-bd"/>
</dbReference>
<dbReference type="NCBIfam" id="NF001764">
    <property type="entry name" value="PRK00504.1"/>
    <property type="match status" value="1"/>
</dbReference>
<dbReference type="NCBIfam" id="NF001860">
    <property type="entry name" value="PRK00595.1"/>
    <property type="match status" value="1"/>
</dbReference>
<dbReference type="NCBIfam" id="TIGR01023">
    <property type="entry name" value="rpmG_bact"/>
    <property type="match status" value="1"/>
</dbReference>
<dbReference type="PANTHER" id="PTHR43168">
    <property type="entry name" value="50S RIBOSOMAL PROTEIN L33, CHLOROPLASTIC"/>
    <property type="match status" value="1"/>
</dbReference>
<dbReference type="PANTHER" id="PTHR43168:SF2">
    <property type="entry name" value="LARGE RIBOSOMAL SUBUNIT PROTEIN BL33C"/>
    <property type="match status" value="1"/>
</dbReference>
<dbReference type="Pfam" id="PF00471">
    <property type="entry name" value="Ribosomal_L33"/>
    <property type="match status" value="1"/>
</dbReference>
<dbReference type="SUPFAM" id="SSF57829">
    <property type="entry name" value="Zn-binding ribosomal proteins"/>
    <property type="match status" value="1"/>
</dbReference>
<dbReference type="PROSITE" id="PS00582">
    <property type="entry name" value="RIBOSOMAL_L33"/>
    <property type="match status" value="1"/>
</dbReference>
<feature type="chain" id="PRO_0000356644" description="Large ribosomal subunit protein bL33B">
    <location>
        <begin position="1"/>
        <end position="55"/>
    </location>
</feature>
<accession>A8M548</accession>
<evidence type="ECO:0000255" key="1">
    <source>
        <dbReference type="HAMAP-Rule" id="MF_00294"/>
    </source>
</evidence>
<reference key="1">
    <citation type="submission" date="2007-10" db="EMBL/GenBank/DDBJ databases">
        <title>Complete sequence of Salinispora arenicola CNS-205.</title>
        <authorList>
            <consortium name="US DOE Joint Genome Institute"/>
            <person name="Copeland A."/>
            <person name="Lucas S."/>
            <person name="Lapidus A."/>
            <person name="Barry K."/>
            <person name="Glavina del Rio T."/>
            <person name="Dalin E."/>
            <person name="Tice H."/>
            <person name="Pitluck S."/>
            <person name="Foster B."/>
            <person name="Schmutz J."/>
            <person name="Larimer F."/>
            <person name="Land M."/>
            <person name="Hauser L."/>
            <person name="Kyrpides N."/>
            <person name="Ivanova N."/>
            <person name="Jensen P.R."/>
            <person name="Moore B.S."/>
            <person name="Penn K."/>
            <person name="Jenkins C."/>
            <person name="Udwary D."/>
            <person name="Xiang L."/>
            <person name="Gontang E."/>
            <person name="Richardson P."/>
        </authorList>
    </citation>
    <scope>NUCLEOTIDE SEQUENCE [LARGE SCALE GENOMIC DNA]</scope>
    <source>
        <strain>CNS-205</strain>
    </source>
</reference>
<sequence length="55" mass="6638">MAKATDVRPKITLACVECKERNYITRKNRRNDPDRIELKKFCPRDGRHTIHRETR</sequence>
<organism>
    <name type="scientific">Salinispora arenicola (strain CNS-205)</name>
    <dbReference type="NCBI Taxonomy" id="391037"/>
    <lineage>
        <taxon>Bacteria</taxon>
        <taxon>Bacillati</taxon>
        <taxon>Actinomycetota</taxon>
        <taxon>Actinomycetes</taxon>
        <taxon>Micromonosporales</taxon>
        <taxon>Micromonosporaceae</taxon>
        <taxon>Salinispora</taxon>
    </lineage>
</organism>
<gene>
    <name evidence="1" type="primary">rpmG2</name>
    <name type="ordered locus">Sare_4334</name>
</gene>
<protein>
    <recommendedName>
        <fullName evidence="1">Large ribosomal subunit protein bL33B</fullName>
    </recommendedName>
    <alternativeName>
        <fullName evidence="1">50S ribosomal protein L33 2</fullName>
    </alternativeName>
</protein>
<keyword id="KW-0687">Ribonucleoprotein</keyword>
<keyword id="KW-0689">Ribosomal protein</keyword>
<name>RL332_SALAI</name>
<comment type="similarity">
    <text evidence="1">Belongs to the bacterial ribosomal protein bL33 family.</text>
</comment>